<comment type="function">
    <text evidence="1">May be involved in wound healing pathway.</text>
</comment>
<comment type="subcellular location">
    <subcellularLocation>
        <location evidence="1">Cytoplasm</location>
    </subcellularLocation>
</comment>
<comment type="alternative products">
    <event type="alternative splicing"/>
    <isoform>
        <id>Q9CRA9-1</id>
        <name>1</name>
        <sequence type="displayed"/>
    </isoform>
    <isoform>
        <id>Q9CRA9-2</id>
        <name>2</name>
        <sequence type="described" ref="VSP_027541"/>
    </isoform>
</comment>
<comment type="similarity">
    <text evidence="6">Belongs to the SIKE family.</text>
</comment>
<protein>
    <recommendedName>
        <fullName>FGFR1 oncogene partner 2 homolog</fullName>
    </recommendedName>
</protein>
<accession>Q9CRA9</accession>
<accession>Q3TEX1</accession>
<accession>Q3TW81</accession>
<accession>Q9D7R0</accession>
<proteinExistence type="evidence at protein level"/>
<evidence type="ECO:0000250" key="1"/>
<evidence type="ECO:0000255" key="2"/>
<evidence type="ECO:0000256" key="3">
    <source>
        <dbReference type="SAM" id="MobiDB-lite"/>
    </source>
</evidence>
<evidence type="ECO:0000303" key="4">
    <source>
    </source>
</evidence>
<evidence type="ECO:0000303" key="5">
    <source>
    </source>
</evidence>
<evidence type="ECO:0000305" key="6"/>
<evidence type="ECO:0007744" key="7">
    <source>
    </source>
</evidence>
<keyword id="KW-0025">Alternative splicing</keyword>
<keyword id="KW-0175">Coiled coil</keyword>
<keyword id="KW-0963">Cytoplasm</keyword>
<keyword id="KW-0597">Phosphoprotein</keyword>
<keyword id="KW-1185">Reference proteome</keyword>
<gene>
    <name type="primary">Fgfr1op2</name>
</gene>
<name>FGOP2_MOUSE</name>
<feature type="chain" id="PRO_0000299042" description="FGFR1 oncogene partner 2 homolog">
    <location>
        <begin position="1"/>
        <end position="253"/>
    </location>
</feature>
<feature type="region of interest" description="Disordered" evidence="3">
    <location>
        <begin position="231"/>
        <end position="253"/>
    </location>
</feature>
<feature type="coiled-coil region" evidence="2">
    <location>
        <begin position="5"/>
        <end position="104"/>
    </location>
</feature>
<feature type="coiled-coil region" evidence="2">
    <location>
        <begin position="160"/>
        <end position="223"/>
    </location>
</feature>
<feature type="compositionally biased region" description="Polar residues" evidence="3">
    <location>
        <begin position="235"/>
        <end position="253"/>
    </location>
</feature>
<feature type="modified residue" description="Phosphoserine" evidence="7">
    <location>
        <position position="140"/>
    </location>
</feature>
<feature type="splice variant" id="VSP_027541" description="In isoform 2." evidence="4 5">
    <location>
        <begin position="133"/>
        <end position="170"/>
    </location>
</feature>
<feature type="sequence conflict" description="In Ref. 1; BAE35385." evidence="6" ref="1">
    <original>M</original>
    <variation>V</variation>
    <location>
        <position position="108"/>
    </location>
</feature>
<feature type="sequence conflict" description="In Ref. 1; BAE41127." evidence="6" ref="1">
    <original>N</original>
    <variation>D</variation>
    <location>
        <position position="211"/>
    </location>
</feature>
<organism>
    <name type="scientific">Mus musculus</name>
    <name type="common">Mouse</name>
    <dbReference type="NCBI Taxonomy" id="10090"/>
    <lineage>
        <taxon>Eukaryota</taxon>
        <taxon>Metazoa</taxon>
        <taxon>Chordata</taxon>
        <taxon>Craniata</taxon>
        <taxon>Vertebrata</taxon>
        <taxon>Euteleostomi</taxon>
        <taxon>Mammalia</taxon>
        <taxon>Eutheria</taxon>
        <taxon>Euarchontoglires</taxon>
        <taxon>Glires</taxon>
        <taxon>Rodentia</taxon>
        <taxon>Myomorpha</taxon>
        <taxon>Muroidea</taxon>
        <taxon>Muridae</taxon>
        <taxon>Murinae</taxon>
        <taxon>Mus</taxon>
        <taxon>Mus</taxon>
    </lineage>
</organism>
<sequence length="253" mass="29374">MSCTIEKALADAKALVERLRDHDDAAESLIEQTTALSKRVEAMKQYQEEIQELNEVARHRPRSTLVMGIQQENRQIRELQQENKELRTSLEEHQSALELIMSKYREQMFRLLMASKKDDPGIIMKLKEQHSKIDMVHRNSCEGFFLDASRHILEAPQHGLERRHLEANQNELQAHVDQITEMAAVMRKAIEIDEQQGCKEQERIFQLEQENKGLREILQITRESFLNLRKDDASESTSLSALVTNSDLSLRKS</sequence>
<dbReference type="EMBL" id="AK004662">
    <property type="protein sequence ID" value="BAB23452.1"/>
    <property type="molecule type" value="mRNA"/>
</dbReference>
<dbReference type="EMBL" id="AK005320">
    <property type="protein sequence ID" value="BAB23951.1"/>
    <property type="molecule type" value="mRNA"/>
</dbReference>
<dbReference type="EMBL" id="AK008983">
    <property type="protein sequence ID" value="BAB26006.1"/>
    <property type="molecule type" value="mRNA"/>
</dbReference>
<dbReference type="EMBL" id="AK151318">
    <property type="protein sequence ID" value="BAE30299.1"/>
    <property type="molecule type" value="mRNA"/>
</dbReference>
<dbReference type="EMBL" id="AK152617">
    <property type="protein sequence ID" value="BAE31360.1"/>
    <property type="molecule type" value="mRNA"/>
</dbReference>
<dbReference type="EMBL" id="AK153137">
    <property type="protein sequence ID" value="BAE31749.1"/>
    <property type="molecule type" value="mRNA"/>
</dbReference>
<dbReference type="EMBL" id="AK159805">
    <property type="protein sequence ID" value="BAE35385.1"/>
    <property type="molecule type" value="mRNA"/>
</dbReference>
<dbReference type="EMBL" id="AK169380">
    <property type="protein sequence ID" value="BAE41127.1"/>
    <property type="molecule type" value="mRNA"/>
</dbReference>
<dbReference type="EMBL" id="AK169383">
    <property type="protein sequence ID" value="BAE41130.1"/>
    <property type="molecule type" value="mRNA"/>
</dbReference>
<dbReference type="EMBL" id="BC028876">
    <property type="protein sequence ID" value="AAH28876.1"/>
    <property type="molecule type" value="mRNA"/>
</dbReference>
<dbReference type="CCDS" id="CCDS39711.1">
    <molecule id="Q9CRA9-1"/>
</dbReference>
<dbReference type="CCDS" id="CCDS85186.1">
    <molecule id="Q9CRA9-2"/>
</dbReference>
<dbReference type="RefSeq" id="NP_001334442.1">
    <molecule id="Q9CRA9-2"/>
    <property type="nucleotide sequence ID" value="NM_001347513.1"/>
</dbReference>
<dbReference type="RefSeq" id="NP_080494.1">
    <molecule id="Q9CRA9-1"/>
    <property type="nucleotide sequence ID" value="NM_026218.2"/>
</dbReference>
<dbReference type="SMR" id="Q9CRA9"/>
<dbReference type="BioGRID" id="212252">
    <property type="interactions" value="6"/>
</dbReference>
<dbReference type="FunCoup" id="Q9CRA9">
    <property type="interactions" value="2553"/>
</dbReference>
<dbReference type="STRING" id="10090.ENSMUSP00000107292"/>
<dbReference type="iPTMnet" id="Q9CRA9"/>
<dbReference type="PhosphoSitePlus" id="Q9CRA9"/>
<dbReference type="jPOST" id="Q9CRA9"/>
<dbReference type="PaxDb" id="10090-ENSMUSP00000107292"/>
<dbReference type="ProteomicsDB" id="270984">
    <molecule id="Q9CRA9-1"/>
</dbReference>
<dbReference type="ProteomicsDB" id="270985">
    <molecule id="Q9CRA9-2"/>
</dbReference>
<dbReference type="Pumba" id="Q9CRA9"/>
<dbReference type="Antibodypedia" id="24359">
    <property type="antibodies" value="214 antibodies from 24 providers"/>
</dbReference>
<dbReference type="Ensembl" id="ENSMUST00000067404.13">
    <molecule id="Q9CRA9-2"/>
    <property type="protein sequence ID" value="ENSMUSP00000098352.4"/>
    <property type="gene ID" value="ENSMUSG00000040242.15"/>
</dbReference>
<dbReference type="Ensembl" id="ENSMUST00000111663.9">
    <molecule id="Q9CRA9-1"/>
    <property type="protein sequence ID" value="ENSMUSP00000107292.3"/>
    <property type="gene ID" value="ENSMUSG00000040242.15"/>
</dbReference>
<dbReference type="GeneID" id="67529"/>
<dbReference type="KEGG" id="mmu:67529"/>
<dbReference type="UCSC" id="uc009esc.1">
    <molecule id="Q9CRA9-1"/>
    <property type="organism name" value="mouse"/>
</dbReference>
<dbReference type="UCSC" id="uc009esd.1">
    <molecule id="Q9CRA9-2"/>
    <property type="organism name" value="mouse"/>
</dbReference>
<dbReference type="AGR" id="MGI:1914779"/>
<dbReference type="CTD" id="26127"/>
<dbReference type="MGI" id="MGI:1914779">
    <property type="gene designation" value="Fgfr1op2"/>
</dbReference>
<dbReference type="VEuPathDB" id="HostDB:ENSMUSG00000040242"/>
<dbReference type="eggNOG" id="ENOG502QSAD">
    <property type="taxonomic scope" value="Eukaryota"/>
</dbReference>
<dbReference type="GeneTree" id="ENSGT00390000018003"/>
<dbReference type="InParanoid" id="Q9CRA9"/>
<dbReference type="OMA" id="KYRQHTE"/>
<dbReference type="OrthoDB" id="21214at2759"/>
<dbReference type="PhylomeDB" id="Q9CRA9"/>
<dbReference type="TreeFam" id="TF324337"/>
<dbReference type="BioGRID-ORCS" id="67529">
    <property type="hits" value="1 hit in 59 CRISPR screens"/>
</dbReference>
<dbReference type="ChiTaRS" id="Fgfr1op2">
    <property type="organism name" value="mouse"/>
</dbReference>
<dbReference type="PRO" id="PR:Q9CRA9"/>
<dbReference type="Proteomes" id="UP000000589">
    <property type="component" value="Chromosome 6"/>
</dbReference>
<dbReference type="RNAct" id="Q9CRA9">
    <property type="molecule type" value="protein"/>
</dbReference>
<dbReference type="Bgee" id="ENSMUSG00000040242">
    <property type="expression patterns" value="Expressed in ascending aorta and 267 other cell types or tissues"/>
</dbReference>
<dbReference type="ExpressionAtlas" id="Q9CRA9">
    <property type="expression patterns" value="baseline and differential"/>
</dbReference>
<dbReference type="GO" id="GO:0005737">
    <property type="term" value="C:cytoplasm"/>
    <property type="evidence" value="ECO:0000266"/>
    <property type="project" value="MGI"/>
</dbReference>
<dbReference type="GO" id="GO:0042802">
    <property type="term" value="F:identical protein binding"/>
    <property type="evidence" value="ECO:0000353"/>
    <property type="project" value="MGI"/>
</dbReference>
<dbReference type="GO" id="GO:0042060">
    <property type="term" value="P:wound healing"/>
    <property type="evidence" value="ECO:0000315"/>
    <property type="project" value="MGI"/>
</dbReference>
<dbReference type="InterPro" id="IPR008555">
    <property type="entry name" value="SIKE"/>
</dbReference>
<dbReference type="PANTHER" id="PTHR12186:SF3">
    <property type="entry name" value="FGFR1 ONCOGENE PARTNER 2"/>
    <property type="match status" value="1"/>
</dbReference>
<dbReference type="PANTHER" id="PTHR12186">
    <property type="entry name" value="SIKE FAMILY MEMBER"/>
    <property type="match status" value="1"/>
</dbReference>
<dbReference type="Pfam" id="PF05769">
    <property type="entry name" value="SIKE"/>
    <property type="match status" value="2"/>
</dbReference>
<reference key="1">
    <citation type="journal article" date="2005" name="Science">
        <title>The transcriptional landscape of the mammalian genome.</title>
        <authorList>
            <person name="Carninci P."/>
            <person name="Kasukawa T."/>
            <person name="Katayama S."/>
            <person name="Gough J."/>
            <person name="Frith M.C."/>
            <person name="Maeda N."/>
            <person name="Oyama R."/>
            <person name="Ravasi T."/>
            <person name="Lenhard B."/>
            <person name="Wells C."/>
            <person name="Kodzius R."/>
            <person name="Shimokawa K."/>
            <person name="Bajic V.B."/>
            <person name="Brenner S.E."/>
            <person name="Batalov S."/>
            <person name="Forrest A.R."/>
            <person name="Zavolan M."/>
            <person name="Davis M.J."/>
            <person name="Wilming L.G."/>
            <person name="Aidinis V."/>
            <person name="Allen J.E."/>
            <person name="Ambesi-Impiombato A."/>
            <person name="Apweiler R."/>
            <person name="Aturaliya R.N."/>
            <person name="Bailey T.L."/>
            <person name="Bansal M."/>
            <person name="Baxter L."/>
            <person name="Beisel K.W."/>
            <person name="Bersano T."/>
            <person name="Bono H."/>
            <person name="Chalk A.M."/>
            <person name="Chiu K.P."/>
            <person name="Choudhary V."/>
            <person name="Christoffels A."/>
            <person name="Clutterbuck D.R."/>
            <person name="Crowe M.L."/>
            <person name="Dalla E."/>
            <person name="Dalrymple B.P."/>
            <person name="de Bono B."/>
            <person name="Della Gatta G."/>
            <person name="di Bernardo D."/>
            <person name="Down T."/>
            <person name="Engstrom P."/>
            <person name="Fagiolini M."/>
            <person name="Faulkner G."/>
            <person name="Fletcher C.F."/>
            <person name="Fukushima T."/>
            <person name="Furuno M."/>
            <person name="Futaki S."/>
            <person name="Gariboldi M."/>
            <person name="Georgii-Hemming P."/>
            <person name="Gingeras T.R."/>
            <person name="Gojobori T."/>
            <person name="Green R.E."/>
            <person name="Gustincich S."/>
            <person name="Harbers M."/>
            <person name="Hayashi Y."/>
            <person name="Hensch T.K."/>
            <person name="Hirokawa N."/>
            <person name="Hill D."/>
            <person name="Huminiecki L."/>
            <person name="Iacono M."/>
            <person name="Ikeo K."/>
            <person name="Iwama A."/>
            <person name="Ishikawa T."/>
            <person name="Jakt M."/>
            <person name="Kanapin A."/>
            <person name="Katoh M."/>
            <person name="Kawasawa Y."/>
            <person name="Kelso J."/>
            <person name="Kitamura H."/>
            <person name="Kitano H."/>
            <person name="Kollias G."/>
            <person name="Krishnan S.P."/>
            <person name="Kruger A."/>
            <person name="Kummerfeld S.K."/>
            <person name="Kurochkin I.V."/>
            <person name="Lareau L.F."/>
            <person name="Lazarevic D."/>
            <person name="Lipovich L."/>
            <person name="Liu J."/>
            <person name="Liuni S."/>
            <person name="McWilliam S."/>
            <person name="Madan Babu M."/>
            <person name="Madera M."/>
            <person name="Marchionni L."/>
            <person name="Matsuda H."/>
            <person name="Matsuzawa S."/>
            <person name="Miki H."/>
            <person name="Mignone F."/>
            <person name="Miyake S."/>
            <person name="Morris K."/>
            <person name="Mottagui-Tabar S."/>
            <person name="Mulder N."/>
            <person name="Nakano N."/>
            <person name="Nakauchi H."/>
            <person name="Ng P."/>
            <person name="Nilsson R."/>
            <person name="Nishiguchi S."/>
            <person name="Nishikawa S."/>
            <person name="Nori F."/>
            <person name="Ohara O."/>
            <person name="Okazaki Y."/>
            <person name="Orlando V."/>
            <person name="Pang K.C."/>
            <person name="Pavan W.J."/>
            <person name="Pavesi G."/>
            <person name="Pesole G."/>
            <person name="Petrovsky N."/>
            <person name="Piazza S."/>
            <person name="Reed J."/>
            <person name="Reid J.F."/>
            <person name="Ring B.Z."/>
            <person name="Ringwald M."/>
            <person name="Rost B."/>
            <person name="Ruan Y."/>
            <person name="Salzberg S.L."/>
            <person name="Sandelin A."/>
            <person name="Schneider C."/>
            <person name="Schoenbach C."/>
            <person name="Sekiguchi K."/>
            <person name="Semple C.A."/>
            <person name="Seno S."/>
            <person name="Sessa L."/>
            <person name="Sheng Y."/>
            <person name="Shibata Y."/>
            <person name="Shimada H."/>
            <person name="Shimada K."/>
            <person name="Silva D."/>
            <person name="Sinclair B."/>
            <person name="Sperling S."/>
            <person name="Stupka E."/>
            <person name="Sugiura K."/>
            <person name="Sultana R."/>
            <person name="Takenaka Y."/>
            <person name="Taki K."/>
            <person name="Tammoja K."/>
            <person name="Tan S.L."/>
            <person name="Tang S."/>
            <person name="Taylor M.S."/>
            <person name="Tegner J."/>
            <person name="Teichmann S.A."/>
            <person name="Ueda H.R."/>
            <person name="van Nimwegen E."/>
            <person name="Verardo R."/>
            <person name="Wei C.L."/>
            <person name="Yagi K."/>
            <person name="Yamanishi H."/>
            <person name="Zabarovsky E."/>
            <person name="Zhu S."/>
            <person name="Zimmer A."/>
            <person name="Hide W."/>
            <person name="Bult C."/>
            <person name="Grimmond S.M."/>
            <person name="Teasdale R.D."/>
            <person name="Liu E.T."/>
            <person name="Brusic V."/>
            <person name="Quackenbush J."/>
            <person name="Wahlestedt C."/>
            <person name="Mattick J.S."/>
            <person name="Hume D.A."/>
            <person name="Kai C."/>
            <person name="Sasaki D."/>
            <person name="Tomaru Y."/>
            <person name="Fukuda S."/>
            <person name="Kanamori-Katayama M."/>
            <person name="Suzuki M."/>
            <person name="Aoki J."/>
            <person name="Arakawa T."/>
            <person name="Iida J."/>
            <person name="Imamura K."/>
            <person name="Itoh M."/>
            <person name="Kato T."/>
            <person name="Kawaji H."/>
            <person name="Kawagashira N."/>
            <person name="Kawashima T."/>
            <person name="Kojima M."/>
            <person name="Kondo S."/>
            <person name="Konno H."/>
            <person name="Nakano K."/>
            <person name="Ninomiya N."/>
            <person name="Nishio T."/>
            <person name="Okada M."/>
            <person name="Plessy C."/>
            <person name="Shibata K."/>
            <person name="Shiraki T."/>
            <person name="Suzuki S."/>
            <person name="Tagami M."/>
            <person name="Waki K."/>
            <person name="Watahiki A."/>
            <person name="Okamura-Oho Y."/>
            <person name="Suzuki H."/>
            <person name="Kawai J."/>
            <person name="Hayashizaki Y."/>
        </authorList>
    </citation>
    <scope>NUCLEOTIDE SEQUENCE [LARGE SCALE MRNA] (ISOFORMS 1 AND 2)</scope>
    <source>
        <strain>C57BL/6J</strain>
        <tissue>Bone marrow</tissue>
        <tissue>Cerebellum</tissue>
        <tissue>Lung</tissue>
        <tissue>Stomach</tissue>
    </source>
</reference>
<reference key="2">
    <citation type="journal article" date="2004" name="Genome Res.">
        <title>The status, quality, and expansion of the NIH full-length cDNA project: the Mammalian Gene Collection (MGC).</title>
        <authorList>
            <consortium name="The MGC Project Team"/>
        </authorList>
    </citation>
    <scope>NUCLEOTIDE SEQUENCE [LARGE SCALE MRNA] (ISOFORM 2)</scope>
    <source>
        <tissue>Eye</tissue>
    </source>
</reference>
<reference key="3">
    <citation type="journal article" date="2010" name="Cell">
        <title>A tissue-specific atlas of mouse protein phosphorylation and expression.</title>
        <authorList>
            <person name="Huttlin E.L."/>
            <person name="Jedrychowski M.P."/>
            <person name="Elias J.E."/>
            <person name="Goswami T."/>
            <person name="Rad R."/>
            <person name="Beausoleil S.A."/>
            <person name="Villen J."/>
            <person name="Haas W."/>
            <person name="Sowa M.E."/>
            <person name="Gygi S.P."/>
        </authorList>
    </citation>
    <scope>PHOSPHORYLATION [LARGE SCALE ANALYSIS] AT SER-140</scope>
    <scope>IDENTIFICATION BY MASS SPECTROMETRY [LARGE SCALE ANALYSIS]</scope>
    <source>
        <tissue>Brain</tissue>
        <tissue>Kidney</tissue>
        <tissue>Lung</tissue>
        <tissue>Spleen</tissue>
    </source>
</reference>